<sequence>MYSISFQEDSLLPRERLAKEGVEALSNQELLAILLRTGTRQASVFEIAQKVLNNLSSLTDLKKMTLQELQSLSGIGRVKAIELQAMIELGHRIHKHETLEMESILSSQKLAKKMQQELGDKKQEHLVALYLNTQNQIIHQQTIFIGSVTRSIAEPREILHYAIKHMATSLILVHNHPSGAVAPSQNDDHVTKLVKEACELMGIVLLDHLIVSHSNYFSYREKTDLI</sequence>
<comment type="similarity">
    <text evidence="2">Belongs to the UPF0758 family.</text>
</comment>
<proteinExistence type="inferred from homology"/>
<evidence type="ECO:0000255" key="1">
    <source>
        <dbReference type="PROSITE-ProRule" id="PRU01182"/>
    </source>
</evidence>
<evidence type="ECO:0000305" key="2"/>
<dbReference type="EMBL" id="CP000920">
    <property type="protein sequence ID" value="ACO20491.1"/>
    <property type="molecule type" value="Genomic_DNA"/>
</dbReference>
<dbReference type="SMR" id="C1CKF5"/>
<dbReference type="KEGG" id="spp:SPP_1095"/>
<dbReference type="HOGENOM" id="CLU_073529_0_2_9"/>
<dbReference type="GO" id="GO:0046872">
    <property type="term" value="F:metal ion binding"/>
    <property type="evidence" value="ECO:0007669"/>
    <property type="project" value="UniProtKB-KW"/>
</dbReference>
<dbReference type="GO" id="GO:0008237">
    <property type="term" value="F:metallopeptidase activity"/>
    <property type="evidence" value="ECO:0007669"/>
    <property type="project" value="UniProtKB-KW"/>
</dbReference>
<dbReference type="GO" id="GO:0006508">
    <property type="term" value="P:proteolysis"/>
    <property type="evidence" value="ECO:0007669"/>
    <property type="project" value="UniProtKB-KW"/>
</dbReference>
<dbReference type="CDD" id="cd08071">
    <property type="entry name" value="MPN_DUF2466"/>
    <property type="match status" value="1"/>
</dbReference>
<dbReference type="Gene3D" id="3.40.140.10">
    <property type="entry name" value="Cytidine Deaminase, domain 2"/>
    <property type="match status" value="1"/>
</dbReference>
<dbReference type="InterPro" id="IPR037518">
    <property type="entry name" value="MPN"/>
</dbReference>
<dbReference type="InterPro" id="IPR025657">
    <property type="entry name" value="RadC_JAB"/>
</dbReference>
<dbReference type="InterPro" id="IPR010994">
    <property type="entry name" value="RuvA_2-like"/>
</dbReference>
<dbReference type="InterPro" id="IPR001405">
    <property type="entry name" value="UPF0758"/>
</dbReference>
<dbReference type="InterPro" id="IPR020891">
    <property type="entry name" value="UPF0758_CS"/>
</dbReference>
<dbReference type="InterPro" id="IPR046778">
    <property type="entry name" value="UPF0758_N"/>
</dbReference>
<dbReference type="NCBIfam" id="NF000642">
    <property type="entry name" value="PRK00024.1"/>
    <property type="match status" value="1"/>
</dbReference>
<dbReference type="NCBIfam" id="TIGR00608">
    <property type="entry name" value="radc"/>
    <property type="match status" value="1"/>
</dbReference>
<dbReference type="PANTHER" id="PTHR30471">
    <property type="entry name" value="DNA REPAIR PROTEIN RADC"/>
    <property type="match status" value="1"/>
</dbReference>
<dbReference type="PANTHER" id="PTHR30471:SF3">
    <property type="entry name" value="UPF0758 PROTEIN YEES-RELATED"/>
    <property type="match status" value="1"/>
</dbReference>
<dbReference type="Pfam" id="PF04002">
    <property type="entry name" value="RadC"/>
    <property type="match status" value="1"/>
</dbReference>
<dbReference type="Pfam" id="PF20582">
    <property type="entry name" value="UPF0758_N"/>
    <property type="match status" value="1"/>
</dbReference>
<dbReference type="SUPFAM" id="SSF47781">
    <property type="entry name" value="RuvA domain 2-like"/>
    <property type="match status" value="1"/>
</dbReference>
<dbReference type="PROSITE" id="PS50249">
    <property type="entry name" value="MPN"/>
    <property type="match status" value="1"/>
</dbReference>
<dbReference type="PROSITE" id="PS01302">
    <property type="entry name" value="UPF0758"/>
    <property type="match status" value="1"/>
</dbReference>
<protein>
    <recommendedName>
        <fullName>UPF0758 protein SPP_1095</fullName>
    </recommendedName>
</protein>
<organism>
    <name type="scientific">Streptococcus pneumoniae (strain P1031)</name>
    <dbReference type="NCBI Taxonomy" id="488223"/>
    <lineage>
        <taxon>Bacteria</taxon>
        <taxon>Bacillati</taxon>
        <taxon>Bacillota</taxon>
        <taxon>Bacilli</taxon>
        <taxon>Lactobacillales</taxon>
        <taxon>Streptococcaceae</taxon>
        <taxon>Streptococcus</taxon>
    </lineage>
</organism>
<feature type="chain" id="PRO_1000195310" description="UPF0758 protein SPP_1095">
    <location>
        <begin position="1"/>
        <end position="226"/>
    </location>
</feature>
<feature type="domain" description="MPN" evidence="1">
    <location>
        <begin position="103"/>
        <end position="225"/>
    </location>
</feature>
<feature type="short sequence motif" description="JAMM motif" evidence="1">
    <location>
        <begin position="174"/>
        <end position="187"/>
    </location>
</feature>
<feature type="binding site" evidence="1">
    <location>
        <position position="174"/>
    </location>
    <ligand>
        <name>Zn(2+)</name>
        <dbReference type="ChEBI" id="CHEBI:29105"/>
        <note>catalytic</note>
    </ligand>
</feature>
<feature type="binding site" evidence="1">
    <location>
        <position position="176"/>
    </location>
    <ligand>
        <name>Zn(2+)</name>
        <dbReference type="ChEBI" id="CHEBI:29105"/>
        <note>catalytic</note>
    </ligand>
</feature>
<feature type="binding site" evidence="1">
    <location>
        <position position="187"/>
    </location>
    <ligand>
        <name>Zn(2+)</name>
        <dbReference type="ChEBI" id="CHEBI:29105"/>
        <note>catalytic</note>
    </ligand>
</feature>
<gene>
    <name type="ordered locus">SPP_1095</name>
</gene>
<name>Y1095_STRZP</name>
<accession>C1CKF5</accession>
<reference key="1">
    <citation type="journal article" date="2010" name="Genome Biol.">
        <title>Structure and dynamics of the pan-genome of Streptococcus pneumoniae and closely related species.</title>
        <authorList>
            <person name="Donati C."/>
            <person name="Hiller N.L."/>
            <person name="Tettelin H."/>
            <person name="Muzzi A."/>
            <person name="Croucher N.J."/>
            <person name="Angiuoli S.V."/>
            <person name="Oggioni M."/>
            <person name="Dunning Hotopp J.C."/>
            <person name="Hu F.Z."/>
            <person name="Riley D.R."/>
            <person name="Covacci A."/>
            <person name="Mitchell T.J."/>
            <person name="Bentley S.D."/>
            <person name="Kilian M."/>
            <person name="Ehrlich G.D."/>
            <person name="Rappuoli R."/>
            <person name="Moxon E.R."/>
            <person name="Masignani V."/>
        </authorList>
    </citation>
    <scope>NUCLEOTIDE SEQUENCE [LARGE SCALE GENOMIC DNA]</scope>
    <source>
        <strain>P1031</strain>
    </source>
</reference>
<keyword id="KW-0378">Hydrolase</keyword>
<keyword id="KW-0479">Metal-binding</keyword>
<keyword id="KW-0482">Metalloprotease</keyword>
<keyword id="KW-0645">Protease</keyword>
<keyword id="KW-0862">Zinc</keyword>